<organism>
    <name type="scientific">Xanthomonas oryzae pv. oryzae (strain MAFF 311018)</name>
    <dbReference type="NCBI Taxonomy" id="342109"/>
    <lineage>
        <taxon>Bacteria</taxon>
        <taxon>Pseudomonadati</taxon>
        <taxon>Pseudomonadota</taxon>
        <taxon>Gammaproteobacteria</taxon>
        <taxon>Lysobacterales</taxon>
        <taxon>Lysobacteraceae</taxon>
        <taxon>Xanthomonas</taxon>
    </lineage>
</organism>
<proteinExistence type="inferred from homology"/>
<evidence type="ECO:0000255" key="1">
    <source>
        <dbReference type="PROSITE-ProRule" id="PRU01182"/>
    </source>
</evidence>
<evidence type="ECO:0000305" key="2"/>
<dbReference type="EMBL" id="AP008229">
    <property type="protein sequence ID" value="BAE67217.1"/>
    <property type="molecule type" value="Genomic_DNA"/>
</dbReference>
<dbReference type="SMR" id="Q2P8B0"/>
<dbReference type="KEGG" id="xom:XOO0462"/>
<dbReference type="HOGENOM" id="CLU_073529_0_1_6"/>
<dbReference type="GO" id="GO:0046872">
    <property type="term" value="F:metal ion binding"/>
    <property type="evidence" value="ECO:0007669"/>
    <property type="project" value="UniProtKB-KW"/>
</dbReference>
<dbReference type="GO" id="GO:0008237">
    <property type="term" value="F:metallopeptidase activity"/>
    <property type="evidence" value="ECO:0007669"/>
    <property type="project" value="UniProtKB-KW"/>
</dbReference>
<dbReference type="GO" id="GO:0006508">
    <property type="term" value="P:proteolysis"/>
    <property type="evidence" value="ECO:0007669"/>
    <property type="project" value="UniProtKB-KW"/>
</dbReference>
<dbReference type="CDD" id="cd08071">
    <property type="entry name" value="MPN_DUF2466"/>
    <property type="match status" value="1"/>
</dbReference>
<dbReference type="Gene3D" id="3.40.140.10">
    <property type="entry name" value="Cytidine Deaminase, domain 2"/>
    <property type="match status" value="1"/>
</dbReference>
<dbReference type="InterPro" id="IPR037518">
    <property type="entry name" value="MPN"/>
</dbReference>
<dbReference type="InterPro" id="IPR025657">
    <property type="entry name" value="RadC_JAB"/>
</dbReference>
<dbReference type="InterPro" id="IPR010994">
    <property type="entry name" value="RuvA_2-like"/>
</dbReference>
<dbReference type="InterPro" id="IPR001405">
    <property type="entry name" value="UPF0758"/>
</dbReference>
<dbReference type="InterPro" id="IPR020891">
    <property type="entry name" value="UPF0758_CS"/>
</dbReference>
<dbReference type="InterPro" id="IPR046778">
    <property type="entry name" value="UPF0758_N"/>
</dbReference>
<dbReference type="NCBIfam" id="NF000642">
    <property type="entry name" value="PRK00024.1"/>
    <property type="match status" value="1"/>
</dbReference>
<dbReference type="NCBIfam" id="TIGR00608">
    <property type="entry name" value="radc"/>
    <property type="match status" value="1"/>
</dbReference>
<dbReference type="PANTHER" id="PTHR30471">
    <property type="entry name" value="DNA REPAIR PROTEIN RADC"/>
    <property type="match status" value="1"/>
</dbReference>
<dbReference type="PANTHER" id="PTHR30471:SF3">
    <property type="entry name" value="UPF0758 PROTEIN YEES-RELATED"/>
    <property type="match status" value="1"/>
</dbReference>
<dbReference type="Pfam" id="PF04002">
    <property type="entry name" value="RadC"/>
    <property type="match status" value="1"/>
</dbReference>
<dbReference type="Pfam" id="PF20582">
    <property type="entry name" value="UPF0758_N"/>
    <property type="match status" value="1"/>
</dbReference>
<dbReference type="SUPFAM" id="SSF47781">
    <property type="entry name" value="RuvA domain 2-like"/>
    <property type="match status" value="1"/>
</dbReference>
<dbReference type="PROSITE" id="PS50249">
    <property type="entry name" value="MPN"/>
    <property type="match status" value="1"/>
</dbReference>
<dbReference type="PROSITE" id="PS01302">
    <property type="entry name" value="UPF0758"/>
    <property type="match status" value="1"/>
</dbReference>
<accession>Q2P8B0</accession>
<sequence>MHIHDWPTNERPREKLLARGATALSDAELLAIFVGSGLRGQDAVQTARDLLHRHGPLRPLLDRPAKALERLPGLGPASACKLAAALELAHRHLMSALERGEALSDPPSVGRYFSQRLRARAYEVFAVLFLDNRHRAIAFEELFTGTIDGADIHPREVVRRALLHNAAAVIVGHNHPSGNPEPSEADRAVTKRLLDSLELVDIRLLDHFVIGDGRPVSLAERGWLE</sequence>
<protein>
    <recommendedName>
        <fullName>UPF0758 protein XOO0462</fullName>
    </recommendedName>
</protein>
<feature type="chain" id="PRO_1000001705" description="UPF0758 protein XOO0462">
    <location>
        <begin position="1"/>
        <end position="225"/>
    </location>
</feature>
<feature type="domain" description="MPN" evidence="1">
    <location>
        <begin position="102"/>
        <end position="224"/>
    </location>
</feature>
<feature type="short sequence motif" description="JAMM motif" evidence="1">
    <location>
        <begin position="173"/>
        <end position="186"/>
    </location>
</feature>
<feature type="binding site" evidence="1">
    <location>
        <position position="173"/>
    </location>
    <ligand>
        <name>Zn(2+)</name>
        <dbReference type="ChEBI" id="CHEBI:29105"/>
        <note>catalytic</note>
    </ligand>
</feature>
<feature type="binding site" evidence="1">
    <location>
        <position position="175"/>
    </location>
    <ligand>
        <name>Zn(2+)</name>
        <dbReference type="ChEBI" id="CHEBI:29105"/>
        <note>catalytic</note>
    </ligand>
</feature>
<feature type="binding site" evidence="1">
    <location>
        <position position="186"/>
    </location>
    <ligand>
        <name>Zn(2+)</name>
        <dbReference type="ChEBI" id="CHEBI:29105"/>
        <note>catalytic</note>
    </ligand>
</feature>
<gene>
    <name type="ordered locus">XOO0462</name>
</gene>
<comment type="similarity">
    <text evidence="2">Belongs to the UPF0758 family.</text>
</comment>
<keyword id="KW-0378">Hydrolase</keyword>
<keyword id="KW-0479">Metal-binding</keyword>
<keyword id="KW-0482">Metalloprotease</keyword>
<keyword id="KW-0645">Protease</keyword>
<keyword id="KW-0862">Zinc</keyword>
<name>Y462_XANOM</name>
<reference key="1">
    <citation type="journal article" date="2005" name="Jpn. Agric. Res. Q.">
        <title>Genome sequence of Xanthomonas oryzae pv. oryzae suggests contribution of large numbers of effector genes and insertion sequences to its race diversity.</title>
        <authorList>
            <person name="Ochiai H."/>
            <person name="Inoue Y."/>
            <person name="Takeya M."/>
            <person name="Sasaki A."/>
            <person name="Kaku H."/>
        </authorList>
    </citation>
    <scope>NUCLEOTIDE SEQUENCE [LARGE SCALE GENOMIC DNA]</scope>
    <source>
        <strain>MAFF 311018</strain>
    </source>
</reference>